<name>RS17_STRA3</name>
<evidence type="ECO:0000255" key="1">
    <source>
        <dbReference type="HAMAP-Rule" id="MF_01345"/>
    </source>
</evidence>
<evidence type="ECO:0000305" key="2"/>
<feature type="chain" id="PRO_0000233573" description="Small ribosomal subunit protein uS17">
    <location>
        <begin position="1"/>
        <end position="86"/>
    </location>
</feature>
<accession>Q8E7T2</accession>
<reference key="1">
    <citation type="journal article" date="2002" name="Mol. Microbiol.">
        <title>Genome sequence of Streptococcus agalactiae, a pathogen causing invasive neonatal disease.</title>
        <authorList>
            <person name="Glaser P."/>
            <person name="Rusniok C."/>
            <person name="Buchrieser C."/>
            <person name="Chevalier F."/>
            <person name="Frangeul L."/>
            <person name="Msadek T."/>
            <person name="Zouine M."/>
            <person name="Couve E."/>
            <person name="Lalioui L."/>
            <person name="Poyart C."/>
            <person name="Trieu-Cuot P."/>
            <person name="Kunst F."/>
        </authorList>
    </citation>
    <scope>NUCLEOTIDE SEQUENCE [LARGE SCALE GENOMIC DNA]</scope>
    <source>
        <strain>NEM316</strain>
    </source>
</reference>
<sequence>MERNQRKTLYGRVVSDKMDKTITVVVETKRNHPVYGKRINYSKKYKAHDENNVAKEGDIVRIMETRPLSATKRFRLVEVVEKAVII</sequence>
<organism>
    <name type="scientific">Streptococcus agalactiae serotype III (strain NEM316)</name>
    <dbReference type="NCBI Taxonomy" id="211110"/>
    <lineage>
        <taxon>Bacteria</taxon>
        <taxon>Bacillati</taxon>
        <taxon>Bacillota</taxon>
        <taxon>Bacilli</taxon>
        <taxon>Lactobacillales</taxon>
        <taxon>Streptococcaceae</taxon>
        <taxon>Streptococcus</taxon>
    </lineage>
</organism>
<gene>
    <name evidence="1" type="primary">rpsQ</name>
    <name type="ordered locus">gbs0067</name>
</gene>
<keyword id="KW-0687">Ribonucleoprotein</keyword>
<keyword id="KW-0689">Ribosomal protein</keyword>
<keyword id="KW-0694">RNA-binding</keyword>
<keyword id="KW-0699">rRNA-binding</keyword>
<protein>
    <recommendedName>
        <fullName evidence="1">Small ribosomal subunit protein uS17</fullName>
    </recommendedName>
    <alternativeName>
        <fullName evidence="2">30S ribosomal protein S17</fullName>
    </alternativeName>
</protein>
<proteinExistence type="inferred from homology"/>
<comment type="function">
    <text evidence="1">One of the primary rRNA binding proteins, it binds specifically to the 5'-end of 16S ribosomal RNA.</text>
</comment>
<comment type="subunit">
    <text evidence="1">Part of the 30S ribosomal subunit.</text>
</comment>
<comment type="similarity">
    <text evidence="1">Belongs to the universal ribosomal protein uS17 family.</text>
</comment>
<dbReference type="EMBL" id="AL766843">
    <property type="protein sequence ID" value="CAD45712.1"/>
    <property type="molecule type" value="Genomic_DNA"/>
</dbReference>
<dbReference type="RefSeq" id="WP_000440811.1">
    <property type="nucleotide sequence ID" value="NC_004368.1"/>
</dbReference>
<dbReference type="SMR" id="Q8E7T2"/>
<dbReference type="GeneID" id="69900035"/>
<dbReference type="KEGG" id="san:rpsQ"/>
<dbReference type="eggNOG" id="COG0186">
    <property type="taxonomic scope" value="Bacteria"/>
</dbReference>
<dbReference type="HOGENOM" id="CLU_073626_1_0_9"/>
<dbReference type="Proteomes" id="UP000000823">
    <property type="component" value="Chromosome"/>
</dbReference>
<dbReference type="GO" id="GO:0022627">
    <property type="term" value="C:cytosolic small ribosomal subunit"/>
    <property type="evidence" value="ECO:0007669"/>
    <property type="project" value="TreeGrafter"/>
</dbReference>
<dbReference type="GO" id="GO:0019843">
    <property type="term" value="F:rRNA binding"/>
    <property type="evidence" value="ECO:0007669"/>
    <property type="project" value="UniProtKB-UniRule"/>
</dbReference>
<dbReference type="GO" id="GO:0003735">
    <property type="term" value="F:structural constituent of ribosome"/>
    <property type="evidence" value="ECO:0007669"/>
    <property type="project" value="InterPro"/>
</dbReference>
<dbReference type="GO" id="GO:0006412">
    <property type="term" value="P:translation"/>
    <property type="evidence" value="ECO:0007669"/>
    <property type="project" value="UniProtKB-UniRule"/>
</dbReference>
<dbReference type="CDD" id="cd00364">
    <property type="entry name" value="Ribosomal_uS17"/>
    <property type="match status" value="1"/>
</dbReference>
<dbReference type="FunFam" id="2.40.50.140:FF:000026">
    <property type="entry name" value="30S ribosomal protein S17"/>
    <property type="match status" value="1"/>
</dbReference>
<dbReference type="Gene3D" id="2.40.50.140">
    <property type="entry name" value="Nucleic acid-binding proteins"/>
    <property type="match status" value="1"/>
</dbReference>
<dbReference type="HAMAP" id="MF_01345_B">
    <property type="entry name" value="Ribosomal_uS17_B"/>
    <property type="match status" value="1"/>
</dbReference>
<dbReference type="InterPro" id="IPR012340">
    <property type="entry name" value="NA-bd_OB-fold"/>
</dbReference>
<dbReference type="InterPro" id="IPR000266">
    <property type="entry name" value="Ribosomal_uS17"/>
</dbReference>
<dbReference type="InterPro" id="IPR019984">
    <property type="entry name" value="Ribosomal_uS17_bact/chlr"/>
</dbReference>
<dbReference type="InterPro" id="IPR019979">
    <property type="entry name" value="Ribosomal_uS17_CS"/>
</dbReference>
<dbReference type="NCBIfam" id="NF004123">
    <property type="entry name" value="PRK05610.1"/>
    <property type="match status" value="1"/>
</dbReference>
<dbReference type="NCBIfam" id="TIGR03635">
    <property type="entry name" value="uS17_bact"/>
    <property type="match status" value="1"/>
</dbReference>
<dbReference type="PANTHER" id="PTHR10744">
    <property type="entry name" value="40S RIBOSOMAL PROTEIN S11 FAMILY MEMBER"/>
    <property type="match status" value="1"/>
</dbReference>
<dbReference type="PANTHER" id="PTHR10744:SF1">
    <property type="entry name" value="SMALL RIBOSOMAL SUBUNIT PROTEIN US17M"/>
    <property type="match status" value="1"/>
</dbReference>
<dbReference type="Pfam" id="PF00366">
    <property type="entry name" value="Ribosomal_S17"/>
    <property type="match status" value="1"/>
</dbReference>
<dbReference type="PRINTS" id="PR00973">
    <property type="entry name" value="RIBOSOMALS17"/>
</dbReference>
<dbReference type="SUPFAM" id="SSF50249">
    <property type="entry name" value="Nucleic acid-binding proteins"/>
    <property type="match status" value="1"/>
</dbReference>
<dbReference type="PROSITE" id="PS00056">
    <property type="entry name" value="RIBOSOMAL_S17"/>
    <property type="match status" value="1"/>
</dbReference>